<name>Y1057_CORJK</name>
<sequence length="251" mass="27054">MAGHSKWATTKHKKAANDAKRGKEFAKLIKNIEVAARTGGGDPSANPTLQDAITKAKKSSVPNDNIERARKRGSGEEAGGANWETIMYEGYGPNGVAMLIECLTDNRNRATTDVRTAMNKNGGNMADAGSVSYLFTRKGVAVLDKGENTEDDILLAVLDAGAEEVNDLGEKFEVVCESSDINAVRDALKEAEIDYDSIELDFRASMEVPADATTAKKVFNLIDALEDSDDVQNVFTNMNVSEDVLAELDSE</sequence>
<feature type="chain" id="PRO_0000257052" description="Probable transcriptional regulatory protein jk1057">
    <location>
        <begin position="1"/>
        <end position="251"/>
    </location>
</feature>
<feature type="region of interest" description="Disordered" evidence="2">
    <location>
        <begin position="1"/>
        <end position="22"/>
    </location>
</feature>
<protein>
    <recommendedName>
        <fullName evidence="1">Probable transcriptional regulatory protein jk1057</fullName>
    </recommendedName>
</protein>
<organism>
    <name type="scientific">Corynebacterium jeikeium (strain K411)</name>
    <dbReference type="NCBI Taxonomy" id="306537"/>
    <lineage>
        <taxon>Bacteria</taxon>
        <taxon>Bacillati</taxon>
        <taxon>Actinomycetota</taxon>
        <taxon>Actinomycetes</taxon>
        <taxon>Mycobacteriales</taxon>
        <taxon>Corynebacteriaceae</taxon>
        <taxon>Corynebacterium</taxon>
    </lineage>
</organism>
<keyword id="KW-0963">Cytoplasm</keyword>
<keyword id="KW-0238">DNA-binding</keyword>
<keyword id="KW-1185">Reference proteome</keyword>
<keyword id="KW-0804">Transcription</keyword>
<keyword id="KW-0805">Transcription regulation</keyword>
<evidence type="ECO:0000255" key="1">
    <source>
        <dbReference type="HAMAP-Rule" id="MF_00693"/>
    </source>
</evidence>
<evidence type="ECO:0000256" key="2">
    <source>
        <dbReference type="SAM" id="MobiDB-lite"/>
    </source>
</evidence>
<dbReference type="EMBL" id="CR931997">
    <property type="protein sequence ID" value="CAI37221.1"/>
    <property type="molecule type" value="Genomic_DNA"/>
</dbReference>
<dbReference type="RefSeq" id="WP_011273620.1">
    <property type="nucleotide sequence ID" value="NC_007164.1"/>
</dbReference>
<dbReference type="SMR" id="Q4JVD6"/>
<dbReference type="STRING" id="306537.jk1057"/>
<dbReference type="KEGG" id="cjk:jk1057"/>
<dbReference type="PATRIC" id="fig|306537.10.peg.1069"/>
<dbReference type="eggNOG" id="COG0217">
    <property type="taxonomic scope" value="Bacteria"/>
</dbReference>
<dbReference type="HOGENOM" id="CLU_062974_2_2_11"/>
<dbReference type="OrthoDB" id="9781053at2"/>
<dbReference type="Proteomes" id="UP000000545">
    <property type="component" value="Chromosome"/>
</dbReference>
<dbReference type="GO" id="GO:0005829">
    <property type="term" value="C:cytosol"/>
    <property type="evidence" value="ECO:0007669"/>
    <property type="project" value="TreeGrafter"/>
</dbReference>
<dbReference type="GO" id="GO:0003677">
    <property type="term" value="F:DNA binding"/>
    <property type="evidence" value="ECO:0007669"/>
    <property type="project" value="UniProtKB-UniRule"/>
</dbReference>
<dbReference type="GO" id="GO:0006355">
    <property type="term" value="P:regulation of DNA-templated transcription"/>
    <property type="evidence" value="ECO:0007669"/>
    <property type="project" value="UniProtKB-UniRule"/>
</dbReference>
<dbReference type="FunFam" id="1.10.10.200:FF:000002">
    <property type="entry name" value="Probable transcriptional regulatory protein CLM62_37755"/>
    <property type="match status" value="1"/>
</dbReference>
<dbReference type="Gene3D" id="1.10.10.200">
    <property type="match status" value="1"/>
</dbReference>
<dbReference type="Gene3D" id="3.30.70.980">
    <property type="match status" value="2"/>
</dbReference>
<dbReference type="HAMAP" id="MF_00693">
    <property type="entry name" value="Transcrip_reg_TACO1"/>
    <property type="match status" value="1"/>
</dbReference>
<dbReference type="InterPro" id="IPR017856">
    <property type="entry name" value="Integrase-like_N"/>
</dbReference>
<dbReference type="InterPro" id="IPR048300">
    <property type="entry name" value="TACO1_YebC-like_2nd/3rd_dom"/>
</dbReference>
<dbReference type="InterPro" id="IPR049083">
    <property type="entry name" value="TACO1_YebC_N"/>
</dbReference>
<dbReference type="InterPro" id="IPR002876">
    <property type="entry name" value="Transcrip_reg_TACO1-like"/>
</dbReference>
<dbReference type="InterPro" id="IPR026564">
    <property type="entry name" value="Transcrip_reg_TACO1-like_dom3"/>
</dbReference>
<dbReference type="InterPro" id="IPR029072">
    <property type="entry name" value="YebC-like"/>
</dbReference>
<dbReference type="NCBIfam" id="NF001030">
    <property type="entry name" value="PRK00110.1"/>
    <property type="match status" value="1"/>
</dbReference>
<dbReference type="NCBIfam" id="NF009044">
    <property type="entry name" value="PRK12378.1"/>
    <property type="match status" value="1"/>
</dbReference>
<dbReference type="NCBIfam" id="TIGR01033">
    <property type="entry name" value="YebC/PmpR family DNA-binding transcriptional regulator"/>
    <property type="match status" value="1"/>
</dbReference>
<dbReference type="PANTHER" id="PTHR12532:SF6">
    <property type="entry name" value="TRANSCRIPTIONAL REGULATORY PROTEIN YEBC-RELATED"/>
    <property type="match status" value="1"/>
</dbReference>
<dbReference type="PANTHER" id="PTHR12532">
    <property type="entry name" value="TRANSLATIONAL ACTIVATOR OF CYTOCHROME C OXIDASE 1"/>
    <property type="match status" value="1"/>
</dbReference>
<dbReference type="Pfam" id="PF20772">
    <property type="entry name" value="TACO1_YebC_N"/>
    <property type="match status" value="1"/>
</dbReference>
<dbReference type="Pfam" id="PF01709">
    <property type="entry name" value="Transcrip_reg"/>
    <property type="match status" value="1"/>
</dbReference>
<dbReference type="SUPFAM" id="SSF75625">
    <property type="entry name" value="YebC-like"/>
    <property type="match status" value="1"/>
</dbReference>
<reference key="1">
    <citation type="journal article" date="2005" name="J. Bacteriol.">
        <title>Complete genome sequence and analysis of the multiresistant nosocomial pathogen Corynebacterium jeikeium K411, a lipid-requiring bacterium of the human skin flora.</title>
        <authorList>
            <person name="Tauch A."/>
            <person name="Kaiser O."/>
            <person name="Hain T."/>
            <person name="Goesmann A."/>
            <person name="Weisshaar B."/>
            <person name="Albersmeier A."/>
            <person name="Bekel T."/>
            <person name="Bischoff N."/>
            <person name="Brune I."/>
            <person name="Chakraborty T."/>
            <person name="Kalinowski J."/>
            <person name="Meyer F."/>
            <person name="Rupp O."/>
            <person name="Schneiker S."/>
            <person name="Viehoever P."/>
            <person name="Puehler A."/>
        </authorList>
    </citation>
    <scope>NUCLEOTIDE SEQUENCE [LARGE SCALE GENOMIC DNA]</scope>
    <source>
        <strain>K411</strain>
    </source>
</reference>
<comment type="subcellular location">
    <subcellularLocation>
        <location evidence="1">Cytoplasm</location>
    </subcellularLocation>
</comment>
<comment type="similarity">
    <text evidence="1">Belongs to the TACO1 family.</text>
</comment>
<accession>Q4JVD6</accession>
<gene>
    <name type="ordered locus">jk1057</name>
</gene>
<proteinExistence type="inferred from homology"/>